<organism>
    <name type="scientific">Escherichia coli (strain K12)</name>
    <dbReference type="NCBI Taxonomy" id="83333"/>
    <lineage>
        <taxon>Bacteria</taxon>
        <taxon>Pseudomonadati</taxon>
        <taxon>Pseudomonadota</taxon>
        <taxon>Gammaproteobacteria</taxon>
        <taxon>Enterobacterales</taxon>
        <taxon>Enterobacteriaceae</taxon>
        <taxon>Escherichia</taxon>
    </lineage>
</organism>
<protein>
    <recommendedName>
        <fullName>Ribosomal large subunit pseudouridine synthase C</fullName>
        <ecNumber evidence="4">5.4.99.24</ecNumber>
    </recommendedName>
    <alternativeName>
        <fullName>23S rRNA pseudouridine(955/2504/2580) synthase</fullName>
    </alternativeName>
    <alternativeName>
        <fullName>rRNA pseudouridylate synthase C</fullName>
    </alternativeName>
    <alternativeName>
        <fullName>rRNA-uridine isomerase C</fullName>
    </alternativeName>
</protein>
<feature type="chain" id="PRO_0000162667" description="Ribosomal large subunit pseudouridine synthase C">
    <location>
        <begin position="1"/>
        <end position="319"/>
    </location>
</feature>
<feature type="domain" description="S4 RNA-binding" evidence="1">
    <location>
        <begin position="20"/>
        <end position="83"/>
    </location>
</feature>
<feature type="active site" evidence="7">
    <location>
        <position position="144"/>
    </location>
</feature>
<feature type="mutagenesis site" description="Does not restore cold-sensitive growth to a double bipA-rluC deletion." evidence="2">
    <original>D</original>
    <variation>T</variation>
    <location>
        <position position="144"/>
    </location>
</feature>
<feature type="helix" evidence="9">
    <location>
        <begin position="91"/>
        <end position="94"/>
    </location>
</feature>
<feature type="strand" evidence="8">
    <location>
        <begin position="95"/>
        <end position="98"/>
    </location>
</feature>
<feature type="strand" evidence="8">
    <location>
        <begin position="100"/>
        <end position="107"/>
    </location>
</feature>
<feature type="strand" evidence="8">
    <location>
        <begin position="117"/>
        <end position="120"/>
    </location>
</feature>
<feature type="helix" evidence="8">
    <location>
        <begin position="123"/>
        <end position="130"/>
    </location>
</feature>
<feature type="strand" evidence="8">
    <location>
        <begin position="138"/>
        <end position="141"/>
    </location>
</feature>
<feature type="strand" evidence="8">
    <location>
        <begin position="148"/>
        <end position="156"/>
    </location>
</feature>
<feature type="helix" evidence="8">
    <location>
        <begin position="157"/>
        <end position="168"/>
    </location>
</feature>
<feature type="strand" evidence="8">
    <location>
        <begin position="172"/>
        <end position="182"/>
    </location>
</feature>
<feature type="strand" evidence="8">
    <location>
        <begin position="195"/>
        <end position="199"/>
    </location>
</feature>
<feature type="strand" evidence="8">
    <location>
        <begin position="205"/>
        <end position="209"/>
    </location>
</feature>
<feature type="strand" evidence="8">
    <location>
        <begin position="218"/>
        <end position="225"/>
    </location>
</feature>
<feature type="strand" evidence="8">
    <location>
        <begin position="227"/>
        <end position="238"/>
    </location>
</feature>
<feature type="helix" evidence="8">
    <location>
        <begin position="243"/>
        <end position="250"/>
    </location>
</feature>
<feature type="turn" evidence="8">
    <location>
        <begin position="259"/>
        <end position="261"/>
    </location>
</feature>
<feature type="helix" evidence="8">
    <location>
        <begin position="264"/>
        <end position="272"/>
    </location>
</feature>
<feature type="strand" evidence="8">
    <location>
        <begin position="282"/>
        <end position="290"/>
    </location>
</feature>
<feature type="turn" evidence="8">
    <location>
        <begin position="292"/>
        <end position="294"/>
    </location>
</feature>
<feature type="strand" evidence="8">
    <location>
        <begin position="297"/>
        <end position="301"/>
    </location>
</feature>
<feature type="helix" evidence="8">
    <location>
        <begin position="306"/>
        <end position="317"/>
    </location>
</feature>
<sequence>MKTETPSVKIVAITADEAGQRIDNFLRTQLKGVPKSMIYRILRKGEVRVNKKRIKPEYKLEAGDEVRIPPVRVAEREEEAVSPHLQKVAALADVILYEDDHILVLNKPSGTAVHGGSGLSFGVIEGLRALRPEARFLELVHRLDRDTSGVLLVAKKRSALRSLHEQLREKGMQKDYLALVRGQWQSHVKSVQAPLLKNILQSGERIVRVSQEGKPSETRFKVEERYAFATLVRCSPVTGRTHQIRVHTQYAGHPIAFDDRYGDREFDRQLTEAGTGLNRLFLHAAALKFTHPGTGEVMRIEAPMDEGLKRCLQKLRNAR</sequence>
<keyword id="KW-0002">3D-structure</keyword>
<keyword id="KW-0903">Direct protein sequencing</keyword>
<keyword id="KW-0413">Isomerase</keyword>
<keyword id="KW-1185">Reference proteome</keyword>
<keyword id="KW-0694">RNA-binding</keyword>
<keyword id="KW-0698">rRNA processing</keyword>
<accession>P0AA39</accession>
<accession>P23851</accession>
<dbReference type="EC" id="5.4.99.24" evidence="4"/>
<dbReference type="EMBL" id="U00096">
    <property type="protein sequence ID" value="AAC74170.1"/>
    <property type="molecule type" value="Genomic_DNA"/>
</dbReference>
<dbReference type="EMBL" id="AP009048">
    <property type="protein sequence ID" value="BAA35894.1"/>
    <property type="molecule type" value="Genomic_DNA"/>
</dbReference>
<dbReference type="EMBL" id="M62747">
    <property type="protein sequence ID" value="AAA23442.1"/>
    <property type="molecule type" value="Genomic_DNA"/>
</dbReference>
<dbReference type="EMBL" id="M96791">
    <property type="protein sequence ID" value="AAA23828.1"/>
    <property type="molecule type" value="Genomic_DNA"/>
</dbReference>
<dbReference type="PIR" id="C64852">
    <property type="entry name" value="C64852"/>
</dbReference>
<dbReference type="RefSeq" id="NP_415604.1">
    <property type="nucleotide sequence ID" value="NC_000913.3"/>
</dbReference>
<dbReference type="RefSeq" id="WP_000846343.1">
    <property type="nucleotide sequence ID" value="NZ_STEB01000016.1"/>
</dbReference>
<dbReference type="PDB" id="1V9K">
    <property type="method" value="X-ray"/>
    <property type="resolution" value="2.00 A"/>
    <property type="chains" value="A/B=92-319"/>
</dbReference>
<dbReference type="PDB" id="1XPI">
    <property type="method" value="X-ray"/>
    <property type="resolution" value="2.20 A"/>
    <property type="chains" value="A/B=89-319"/>
</dbReference>
<dbReference type="PDBsum" id="1V9K"/>
<dbReference type="PDBsum" id="1XPI"/>
<dbReference type="SMR" id="P0AA39"/>
<dbReference type="BioGRID" id="4261025">
    <property type="interactions" value="77"/>
</dbReference>
<dbReference type="BioGRID" id="850009">
    <property type="interactions" value="1"/>
</dbReference>
<dbReference type="DIP" id="DIP-47832N"/>
<dbReference type="FunCoup" id="P0AA39">
    <property type="interactions" value="683"/>
</dbReference>
<dbReference type="IntAct" id="P0AA39">
    <property type="interactions" value="70"/>
</dbReference>
<dbReference type="STRING" id="511145.b1086"/>
<dbReference type="jPOST" id="P0AA39"/>
<dbReference type="PaxDb" id="511145-b1086"/>
<dbReference type="EnsemblBacteria" id="AAC74170">
    <property type="protein sequence ID" value="AAC74170"/>
    <property type="gene ID" value="b1086"/>
</dbReference>
<dbReference type="GeneID" id="75203672"/>
<dbReference type="GeneID" id="945637"/>
<dbReference type="KEGG" id="ecj:JW1072"/>
<dbReference type="KEGG" id="eco:b1086"/>
<dbReference type="KEGG" id="ecoc:C3026_06575"/>
<dbReference type="PATRIC" id="fig|1411691.4.peg.1182"/>
<dbReference type="EchoBASE" id="EB1108"/>
<dbReference type="eggNOG" id="COG0564">
    <property type="taxonomic scope" value="Bacteria"/>
</dbReference>
<dbReference type="HOGENOM" id="CLU_016902_1_1_6"/>
<dbReference type="InParanoid" id="P0AA39"/>
<dbReference type="OMA" id="PKSHVYR"/>
<dbReference type="OrthoDB" id="9807829at2"/>
<dbReference type="PhylomeDB" id="P0AA39"/>
<dbReference type="BioCyc" id="EcoCyc:EG11118-MONOMER"/>
<dbReference type="BioCyc" id="MetaCyc:EG11118-MONOMER"/>
<dbReference type="BRENDA" id="5.4.99.24">
    <property type="organism ID" value="2026"/>
</dbReference>
<dbReference type="EvolutionaryTrace" id="P0AA39"/>
<dbReference type="PRO" id="PR:P0AA39"/>
<dbReference type="Proteomes" id="UP000000625">
    <property type="component" value="Chromosome"/>
</dbReference>
<dbReference type="GO" id="GO:0005829">
    <property type="term" value="C:cytosol"/>
    <property type="evidence" value="ECO:0000314"/>
    <property type="project" value="EcoCyc"/>
</dbReference>
<dbReference type="GO" id="GO:0160141">
    <property type="term" value="F:23S rRNA pseudouridine(955/2504/2580) synthase activity"/>
    <property type="evidence" value="ECO:0007669"/>
    <property type="project" value="UniProtKB-EC"/>
</dbReference>
<dbReference type="GO" id="GO:0009982">
    <property type="term" value="F:pseudouridine synthase activity"/>
    <property type="evidence" value="ECO:0000318"/>
    <property type="project" value="GO_Central"/>
</dbReference>
<dbReference type="GO" id="GO:0003723">
    <property type="term" value="F:RNA binding"/>
    <property type="evidence" value="ECO:0007669"/>
    <property type="project" value="UniProtKB-KW"/>
</dbReference>
<dbReference type="GO" id="GO:0120159">
    <property type="term" value="F:rRNA pseudouridine synthase activity"/>
    <property type="evidence" value="ECO:0000314"/>
    <property type="project" value="EcoCyc"/>
</dbReference>
<dbReference type="GO" id="GO:0000455">
    <property type="term" value="P:enzyme-directed rRNA pseudouridine synthesis"/>
    <property type="evidence" value="ECO:0000314"/>
    <property type="project" value="EcoliWiki"/>
</dbReference>
<dbReference type="CDD" id="cd02869">
    <property type="entry name" value="PseudoU_synth_RluA_like"/>
    <property type="match status" value="1"/>
</dbReference>
<dbReference type="CDD" id="cd00165">
    <property type="entry name" value="S4"/>
    <property type="match status" value="1"/>
</dbReference>
<dbReference type="FunFam" id="3.10.290.10:FF:000010">
    <property type="entry name" value="Pseudouridine synthase"/>
    <property type="match status" value="1"/>
</dbReference>
<dbReference type="FunFam" id="3.30.2350.10:FF:000007">
    <property type="entry name" value="Pseudouridine synthase"/>
    <property type="match status" value="1"/>
</dbReference>
<dbReference type="Gene3D" id="3.30.2350.10">
    <property type="entry name" value="Pseudouridine synthase"/>
    <property type="match status" value="1"/>
</dbReference>
<dbReference type="Gene3D" id="3.10.290.10">
    <property type="entry name" value="RNA-binding S4 domain"/>
    <property type="match status" value="1"/>
</dbReference>
<dbReference type="InterPro" id="IPR020103">
    <property type="entry name" value="PsdUridine_synth_cat_dom_sf"/>
</dbReference>
<dbReference type="InterPro" id="IPR006224">
    <property type="entry name" value="PsdUridine_synth_RluA-like_CS"/>
</dbReference>
<dbReference type="InterPro" id="IPR006225">
    <property type="entry name" value="PsdUridine_synth_RluC/D"/>
</dbReference>
<dbReference type="InterPro" id="IPR006145">
    <property type="entry name" value="PsdUridine_synth_RsuA/RluA"/>
</dbReference>
<dbReference type="InterPro" id="IPR050188">
    <property type="entry name" value="RluA_PseudoU_synthase"/>
</dbReference>
<dbReference type="InterPro" id="IPR002942">
    <property type="entry name" value="S4_RNA-bd"/>
</dbReference>
<dbReference type="InterPro" id="IPR036986">
    <property type="entry name" value="S4_RNA-bd_sf"/>
</dbReference>
<dbReference type="NCBIfam" id="NF008249">
    <property type="entry name" value="PRK11025.1"/>
    <property type="match status" value="1"/>
</dbReference>
<dbReference type="NCBIfam" id="TIGR00005">
    <property type="entry name" value="rluA_subfam"/>
    <property type="match status" value="1"/>
</dbReference>
<dbReference type="PANTHER" id="PTHR21600">
    <property type="entry name" value="MITOCHONDRIAL RNA PSEUDOURIDINE SYNTHASE"/>
    <property type="match status" value="1"/>
</dbReference>
<dbReference type="PANTHER" id="PTHR21600:SF92">
    <property type="entry name" value="RIBOSOMAL LARGE SUBUNIT PSEUDOURIDINE SYNTHASE C"/>
    <property type="match status" value="1"/>
</dbReference>
<dbReference type="Pfam" id="PF00849">
    <property type="entry name" value="PseudoU_synth_2"/>
    <property type="match status" value="1"/>
</dbReference>
<dbReference type="Pfam" id="PF01479">
    <property type="entry name" value="S4"/>
    <property type="match status" value="1"/>
</dbReference>
<dbReference type="SMART" id="SM00363">
    <property type="entry name" value="S4"/>
    <property type="match status" value="1"/>
</dbReference>
<dbReference type="SUPFAM" id="SSF55174">
    <property type="entry name" value="Alpha-L RNA-binding motif"/>
    <property type="match status" value="1"/>
</dbReference>
<dbReference type="SUPFAM" id="SSF55120">
    <property type="entry name" value="Pseudouridine synthase"/>
    <property type="match status" value="1"/>
</dbReference>
<dbReference type="PROSITE" id="PS01129">
    <property type="entry name" value="PSI_RLU"/>
    <property type="match status" value="1"/>
</dbReference>
<dbReference type="PROSITE" id="PS50889">
    <property type="entry name" value="S4"/>
    <property type="match status" value="1"/>
</dbReference>
<reference key="1">
    <citation type="journal article" date="1996" name="DNA Res.">
        <title>A 718-kb DNA sequence of the Escherichia coli K-12 genome corresponding to the 12.7-28.0 min region on the linkage map.</title>
        <authorList>
            <person name="Oshima T."/>
            <person name="Aiba H."/>
            <person name="Baba T."/>
            <person name="Fujita K."/>
            <person name="Hayashi K."/>
            <person name="Honjo A."/>
            <person name="Ikemoto K."/>
            <person name="Inada T."/>
            <person name="Itoh T."/>
            <person name="Kajihara M."/>
            <person name="Kanai K."/>
            <person name="Kashimoto K."/>
            <person name="Kimura S."/>
            <person name="Kitagawa M."/>
            <person name="Makino K."/>
            <person name="Masuda S."/>
            <person name="Miki T."/>
            <person name="Mizobuchi K."/>
            <person name="Mori H."/>
            <person name="Motomura K."/>
            <person name="Nakamura Y."/>
            <person name="Nashimoto H."/>
            <person name="Nishio Y."/>
            <person name="Saito N."/>
            <person name="Sampei G."/>
            <person name="Seki Y."/>
            <person name="Tagami H."/>
            <person name="Takemoto K."/>
            <person name="Wada C."/>
            <person name="Yamamoto Y."/>
            <person name="Yano M."/>
            <person name="Horiuchi T."/>
        </authorList>
    </citation>
    <scope>NUCLEOTIDE SEQUENCE [LARGE SCALE GENOMIC DNA]</scope>
    <source>
        <strain>K12 / W3110 / ATCC 27325 / DSM 5911</strain>
    </source>
</reference>
<reference key="2">
    <citation type="journal article" date="1997" name="Science">
        <title>The complete genome sequence of Escherichia coli K-12.</title>
        <authorList>
            <person name="Blattner F.R."/>
            <person name="Plunkett G. III"/>
            <person name="Bloch C.A."/>
            <person name="Perna N.T."/>
            <person name="Burland V."/>
            <person name="Riley M."/>
            <person name="Collado-Vides J."/>
            <person name="Glasner J.D."/>
            <person name="Rode C.K."/>
            <person name="Mayhew G.F."/>
            <person name="Gregor J."/>
            <person name="Davis N.W."/>
            <person name="Kirkpatrick H.A."/>
            <person name="Goeden M.A."/>
            <person name="Rose D.J."/>
            <person name="Mau B."/>
            <person name="Shao Y."/>
        </authorList>
    </citation>
    <scope>NUCLEOTIDE SEQUENCE [LARGE SCALE GENOMIC DNA]</scope>
    <source>
        <strain>K12 / MG1655 / ATCC 47076</strain>
    </source>
</reference>
<reference key="3">
    <citation type="journal article" date="2006" name="Mol. Syst. Biol.">
        <title>Highly accurate genome sequences of Escherichia coli K-12 strains MG1655 and W3110.</title>
        <authorList>
            <person name="Hayashi K."/>
            <person name="Morooka N."/>
            <person name="Yamamoto Y."/>
            <person name="Fujita K."/>
            <person name="Isono K."/>
            <person name="Choi S."/>
            <person name="Ohtsubo E."/>
            <person name="Baba T."/>
            <person name="Wanner B.L."/>
            <person name="Mori H."/>
            <person name="Horiuchi T."/>
        </authorList>
    </citation>
    <scope>NUCLEOTIDE SEQUENCE [LARGE SCALE GENOMIC DNA]</scope>
    <source>
        <strain>K12 / W3110 / ATCC 27325 / DSM 5911</strain>
    </source>
</reference>
<reference key="4">
    <citation type="journal article" date="1991" name="J. Biol. Chem.">
        <title>Analysis of the altered mRNA stability (ams) gene from Escherichia coli. Nucleotide sequence, transcriptional analysis, and homology of its product to MRP3, a mitochondrial ribosomal protein from Neurospora crassa.</title>
        <authorList>
            <person name="Claverie-Martin F."/>
            <person name="Diaz-Torres M."/>
            <person name="Yancey S.D."/>
            <person name="Kushner S.R."/>
        </authorList>
    </citation>
    <scope>NUCLEOTIDE SEQUENCE [GENOMIC DNA] OF 1-285</scope>
    <source>
        <strain>K12</strain>
    </source>
</reference>
<reference key="5">
    <citation type="journal article" date="1992" name="J. Bacteriol.">
        <title>Physical locations of genes in the rne (ams)-rpmF-plsX-fab region of the Escherichia coli K-12 chromosome.</title>
        <authorList>
            <person name="Oh W."/>
            <person name="Larson T.J."/>
        </authorList>
    </citation>
    <scope>NUCLEOTIDE SEQUENCE [GENOMIC DNA] OF 260-319</scope>
    <source>
        <strain>K12</strain>
    </source>
</reference>
<reference key="6">
    <citation type="journal article" date="1998" name="J. Biol. Chem.">
        <title>The rluC gene of Escherichia coli codes for a pseudouridine synthase that is solely responsible for synthesis of pseudouridine at positions 955, 2504, and 2580 in 23 S ribosomal RNA.</title>
        <authorList>
            <person name="Conrad J."/>
            <person name="Sun D."/>
            <person name="Englund N."/>
            <person name="Ofengand J."/>
        </authorList>
    </citation>
    <scope>FUNCTION</scope>
    <scope>CATALYTIC ACTIVITY</scope>
    <scope>DISRUPTION PHENOTYPE</scope>
    <source>
        <strain>K12 / MG1655 / ATCC 47076</strain>
    </source>
</reference>
<reference key="7">
    <citation type="journal article" date="2008" name="J. Bacteriol.">
        <title>Suppression of DeltabipA phenotypes in Escherichia coli by abolishment of pseudouridylation at specific sites on the 23S rRNA.</title>
        <authorList>
            <person name="Krishnan K."/>
            <person name="Flower A.M."/>
        </authorList>
    </citation>
    <scope>PROBABLE ACTIVE SITE</scope>
    <scope>DISRUPTION PHENOTYPE</scope>
    <scope>MUTAGENESIS OF ASP-144</scope>
    <source>
        <strain>K12</strain>
    </source>
</reference>
<reference key="8">
    <citation type="journal article" date="2015" name="J. Bacteriol.">
        <title>Efficient assembly of ribosomes is inhibited by deletion of bipA in Escherichia coli.</title>
        <authorList>
            <person name="Choudhury P."/>
            <person name="Flower A.M."/>
        </authorList>
    </citation>
    <scope>DISRUPTION PHENOTYPE</scope>
    <source>
        <strain>K12 / MG1655 / ATCC 47076</strain>
    </source>
</reference>
<reference key="9">
    <citation type="journal article" date="1999" name="Acta Crystallogr. D">
        <title>Crystallization and characterization of a fragment of pseudouridine synthase RluC from Escherichia coli.</title>
        <authorList>
            <person name="Corollo D."/>
            <person name="Blair-Johnson M."/>
            <person name="Conrad J."/>
            <person name="Fiedler T."/>
            <person name="Sun D."/>
            <person name="Wang L."/>
            <person name="Ofengand J."/>
            <person name="Fenna R."/>
        </authorList>
    </citation>
    <scope>CRYSTALLIZATION OF 89-319</scope>
    <scope>PROTEIN SEQUENCE OF 89-98</scope>
    <source>
        <strain>BL21-DE3</strain>
    </source>
</reference>
<evidence type="ECO:0000255" key="1">
    <source>
        <dbReference type="PROSITE-ProRule" id="PRU00182"/>
    </source>
</evidence>
<evidence type="ECO:0000269" key="2">
    <source>
    </source>
</evidence>
<evidence type="ECO:0000269" key="3">
    <source>
    </source>
</evidence>
<evidence type="ECO:0000269" key="4">
    <source>
    </source>
</evidence>
<evidence type="ECO:0000303" key="5">
    <source>
    </source>
</evidence>
<evidence type="ECO:0000305" key="6"/>
<evidence type="ECO:0000305" key="7">
    <source>
    </source>
</evidence>
<evidence type="ECO:0007829" key="8">
    <source>
        <dbReference type="PDB" id="1V9K"/>
    </source>
</evidence>
<evidence type="ECO:0007829" key="9">
    <source>
        <dbReference type="PDB" id="1XPI"/>
    </source>
</evidence>
<proteinExistence type="evidence at protein level"/>
<name>RLUC_ECOLI</name>
<gene>
    <name evidence="5" type="primary">rluC</name>
    <name type="synonym">yceC</name>
    <name type="ordered locus">b1086</name>
    <name type="ordered locus">JW1072</name>
</gene>
<comment type="function">
    <text evidence="4">Responsible for synthesis of pseudouridine from uracil at positions 955, 2504 and 2580 in 23S ribosomal RNA.</text>
</comment>
<comment type="catalytic activity">
    <reaction evidence="4">
        <text>uridine(955/2504/2580) in 23S rRNA = pseudouridine(955/2504/2580) in 23S rRNA</text>
        <dbReference type="Rhea" id="RHEA:42528"/>
        <dbReference type="Rhea" id="RHEA-COMP:10099"/>
        <dbReference type="Rhea" id="RHEA-COMP:10100"/>
        <dbReference type="ChEBI" id="CHEBI:65314"/>
        <dbReference type="ChEBI" id="CHEBI:65315"/>
        <dbReference type="EC" id="5.4.99.24"/>
    </reaction>
</comment>
<comment type="disruption phenotype">
    <text evidence="2 3 4">No visible growth phenotype (PubMed:9660827). An rluC deletion suppresses a bipA deletion; in a double rluC-bipA deletion the cold-sensitive growth and ribosome assembly defects at 20 degrees Celsius due to bipA are fully suppressed and decreased capsule synthesis is partially suppressed (PubMed:18820021, PubMed:25777676).</text>
</comment>
<comment type="similarity">
    <text evidence="6">Belongs to the pseudouridine synthase RluA family.</text>
</comment>